<proteinExistence type="inferred from homology"/>
<organism>
    <name type="scientific">Gardnerella vaginalis</name>
    <dbReference type="NCBI Taxonomy" id="2702"/>
    <lineage>
        <taxon>Bacteria</taxon>
        <taxon>Bacillati</taxon>
        <taxon>Actinomycetota</taxon>
        <taxon>Actinomycetes</taxon>
        <taxon>Bifidobacteriales</taxon>
        <taxon>Bifidobacteriaceae</taxon>
        <taxon>Gardnerella</taxon>
    </lineage>
</organism>
<comment type="function">
    <text evidence="1">Together with its co-chaperonin GroES, plays an essential role in assisting protein folding. The GroEL-GroES system forms a nano-cage that allows encapsulation of the non-native substrate proteins and provides a physical environment optimized to promote and accelerate protein folding.</text>
</comment>
<comment type="catalytic activity">
    <reaction evidence="1">
        <text>ATP + H2O + a folded polypeptide = ADP + phosphate + an unfolded polypeptide.</text>
        <dbReference type="EC" id="5.6.1.7"/>
    </reaction>
</comment>
<comment type="subunit">
    <text evidence="1">Forms a cylinder of 14 subunits composed of two heptameric rings stacked back-to-back. Interacts with the co-chaperonin GroES.</text>
</comment>
<comment type="subcellular location">
    <subcellularLocation>
        <location evidence="1">Cytoplasm</location>
    </subcellularLocation>
</comment>
<comment type="similarity">
    <text evidence="1">Belongs to the chaperonin (HSP60) family.</text>
</comment>
<keyword id="KW-0067">ATP-binding</keyword>
<keyword id="KW-0143">Chaperone</keyword>
<keyword id="KW-0963">Cytoplasm</keyword>
<keyword id="KW-0413">Isomerase</keyword>
<keyword id="KW-0547">Nucleotide-binding</keyword>
<feature type="chain" id="PRO_0000063380" description="Chaperonin GroEL">
    <location>
        <begin position="1"/>
        <end position="541"/>
    </location>
</feature>
<feature type="binding site" evidence="1">
    <location>
        <begin position="29"/>
        <end position="32"/>
    </location>
    <ligand>
        <name>ATP</name>
        <dbReference type="ChEBI" id="CHEBI:30616"/>
    </ligand>
</feature>
<feature type="binding site" evidence="1">
    <location>
        <begin position="86"/>
        <end position="90"/>
    </location>
    <ligand>
        <name>ATP</name>
        <dbReference type="ChEBI" id="CHEBI:30616"/>
    </ligand>
</feature>
<feature type="binding site" evidence="1">
    <location>
        <position position="413"/>
    </location>
    <ligand>
        <name>ATP</name>
        <dbReference type="ChEBI" id="CHEBI:30616"/>
    </ligand>
</feature>
<feature type="binding site" evidence="1">
    <location>
        <begin position="480"/>
        <end position="482"/>
    </location>
    <ligand>
        <name>ATP</name>
        <dbReference type="ChEBI" id="CHEBI:30616"/>
    </ligand>
</feature>
<feature type="binding site" evidence="1">
    <location>
        <position position="496"/>
    </location>
    <ligand>
        <name>ATP</name>
        <dbReference type="ChEBI" id="CHEBI:30616"/>
    </ligand>
</feature>
<accession>Q9KI57</accession>
<sequence length="541" mass="56761">MAKIIAYEEDARQGMLAGLDRLANTVKVTLGPKGRNVVLDKSYGAPTITNDGVSIAKEIDLEDPYERIGAELVKEVAKKTDDVAGDGTTTATVLAQSLVHEGLKNVVAGSNPIALRRGIEKASEAIVKELLASAKDVETKDQIAATATISAADPEVGEKIAEALDKVGQDGVVTVEDNNKFGLDLDFTEGMRFDKGYISPYFVTNAEDQTAVLEDPYILLTSGKVSSQQDIVHVAELVMKSGKPLLIIAEDVDGEALPTLVLNKIRGTFNTVAVKAPGFGDRRKAMLQDMAILTGAQVVSDDLGLKLDSIDASVFGHAAKVIVSKDETTIVSGAGSKEDVEARVAQIRAEIENTDSDYDREKLQERLAKLAGGVAVIKVGAATEVEAKERKHRIEDAVRNAKAAIEEGLLPGGGVALVQAAAKVEKSADIVALSGEEATGAAIVFRAVEAPIKQIAQNSGVSGDVVLNKVRELPEGEGFNAATNTYEDLLAAGVTDPVKVTRSALQNAASIAGLFLTTEAVVANKPEKPAAAPQAGAEMGY</sequence>
<protein>
    <recommendedName>
        <fullName evidence="1">Chaperonin GroEL</fullName>
        <ecNumber evidence="1">5.6.1.7</ecNumber>
    </recommendedName>
    <alternativeName>
        <fullName evidence="1">60 kDa chaperonin</fullName>
    </alternativeName>
    <alternativeName>
        <fullName evidence="1">Chaperonin-60</fullName>
        <shortName evidence="1">Cpn60</shortName>
    </alternativeName>
</protein>
<reference key="1">
    <citation type="submission" date="2000-09" db="EMBL/GenBank/DDBJ databases">
        <title>Phylogenetic relationship of Bifidobacterium.</title>
        <authorList>
            <person name="Jian W."/>
            <person name="Dong X."/>
        </authorList>
    </citation>
    <scope>NUCLEOTIDE SEQUENCE [GENOMIC DNA]</scope>
    <source>
        <strain>ATCC 14018 / DSM 4944 / JCM 11026 / KCTC 5096 / LMG 7832 / NCTC 10287 / 594</strain>
    </source>
</reference>
<gene>
    <name evidence="1" type="primary">groEL</name>
    <name evidence="1" type="synonym">groL</name>
    <name type="synonym">hsp60</name>
</gene>
<name>CH60_GARVA</name>
<evidence type="ECO:0000255" key="1">
    <source>
        <dbReference type="HAMAP-Rule" id="MF_00600"/>
    </source>
</evidence>
<dbReference type="EC" id="5.6.1.7" evidence="1"/>
<dbReference type="EMBL" id="AF240579">
    <property type="protein sequence ID" value="AAF43464.3"/>
    <property type="molecule type" value="Genomic_DNA"/>
</dbReference>
<dbReference type="SMR" id="Q9KI57"/>
<dbReference type="STRING" id="2702.HMPREF3204_01284"/>
<dbReference type="eggNOG" id="COG0459">
    <property type="taxonomic scope" value="Bacteria"/>
</dbReference>
<dbReference type="GO" id="GO:0005737">
    <property type="term" value="C:cytoplasm"/>
    <property type="evidence" value="ECO:0007669"/>
    <property type="project" value="UniProtKB-SubCell"/>
</dbReference>
<dbReference type="GO" id="GO:0005524">
    <property type="term" value="F:ATP binding"/>
    <property type="evidence" value="ECO:0007669"/>
    <property type="project" value="UniProtKB-UniRule"/>
</dbReference>
<dbReference type="GO" id="GO:0140662">
    <property type="term" value="F:ATP-dependent protein folding chaperone"/>
    <property type="evidence" value="ECO:0007669"/>
    <property type="project" value="InterPro"/>
</dbReference>
<dbReference type="GO" id="GO:0016853">
    <property type="term" value="F:isomerase activity"/>
    <property type="evidence" value="ECO:0007669"/>
    <property type="project" value="UniProtKB-KW"/>
</dbReference>
<dbReference type="GO" id="GO:0051082">
    <property type="term" value="F:unfolded protein binding"/>
    <property type="evidence" value="ECO:0007669"/>
    <property type="project" value="UniProtKB-UniRule"/>
</dbReference>
<dbReference type="GO" id="GO:0042026">
    <property type="term" value="P:protein refolding"/>
    <property type="evidence" value="ECO:0007669"/>
    <property type="project" value="UniProtKB-UniRule"/>
</dbReference>
<dbReference type="CDD" id="cd03344">
    <property type="entry name" value="GroEL"/>
    <property type="match status" value="1"/>
</dbReference>
<dbReference type="FunFam" id="3.50.7.10:FF:000001">
    <property type="entry name" value="60 kDa chaperonin"/>
    <property type="match status" value="1"/>
</dbReference>
<dbReference type="Gene3D" id="3.50.7.10">
    <property type="entry name" value="GroEL"/>
    <property type="match status" value="1"/>
</dbReference>
<dbReference type="Gene3D" id="1.10.560.10">
    <property type="entry name" value="GroEL-like equatorial domain"/>
    <property type="match status" value="1"/>
</dbReference>
<dbReference type="Gene3D" id="3.30.260.10">
    <property type="entry name" value="TCP-1-like chaperonin intermediate domain"/>
    <property type="match status" value="1"/>
</dbReference>
<dbReference type="HAMAP" id="MF_00600">
    <property type="entry name" value="CH60"/>
    <property type="match status" value="1"/>
</dbReference>
<dbReference type="InterPro" id="IPR018370">
    <property type="entry name" value="Chaperonin_Cpn60_CS"/>
</dbReference>
<dbReference type="InterPro" id="IPR001844">
    <property type="entry name" value="Cpn60/GroEL"/>
</dbReference>
<dbReference type="InterPro" id="IPR002423">
    <property type="entry name" value="Cpn60/GroEL/TCP-1"/>
</dbReference>
<dbReference type="InterPro" id="IPR027409">
    <property type="entry name" value="GroEL-like_apical_dom_sf"/>
</dbReference>
<dbReference type="InterPro" id="IPR027413">
    <property type="entry name" value="GROEL-like_equatorial_sf"/>
</dbReference>
<dbReference type="InterPro" id="IPR027410">
    <property type="entry name" value="TCP-1-like_intermed_sf"/>
</dbReference>
<dbReference type="NCBIfam" id="TIGR02348">
    <property type="entry name" value="GroEL"/>
    <property type="match status" value="1"/>
</dbReference>
<dbReference type="NCBIfam" id="NF000592">
    <property type="entry name" value="PRK00013.1"/>
    <property type="match status" value="1"/>
</dbReference>
<dbReference type="NCBIfam" id="NF009487">
    <property type="entry name" value="PRK12849.1"/>
    <property type="match status" value="1"/>
</dbReference>
<dbReference type="NCBIfam" id="NF009488">
    <property type="entry name" value="PRK12850.1"/>
    <property type="match status" value="1"/>
</dbReference>
<dbReference type="NCBIfam" id="NF009489">
    <property type="entry name" value="PRK12851.1"/>
    <property type="match status" value="1"/>
</dbReference>
<dbReference type="PANTHER" id="PTHR45633">
    <property type="entry name" value="60 KDA HEAT SHOCK PROTEIN, MITOCHONDRIAL"/>
    <property type="match status" value="1"/>
</dbReference>
<dbReference type="Pfam" id="PF00118">
    <property type="entry name" value="Cpn60_TCP1"/>
    <property type="match status" value="1"/>
</dbReference>
<dbReference type="PRINTS" id="PR00298">
    <property type="entry name" value="CHAPERONIN60"/>
</dbReference>
<dbReference type="SUPFAM" id="SSF52029">
    <property type="entry name" value="GroEL apical domain-like"/>
    <property type="match status" value="1"/>
</dbReference>
<dbReference type="SUPFAM" id="SSF48592">
    <property type="entry name" value="GroEL equatorial domain-like"/>
    <property type="match status" value="1"/>
</dbReference>
<dbReference type="SUPFAM" id="SSF54849">
    <property type="entry name" value="GroEL-intermediate domain like"/>
    <property type="match status" value="1"/>
</dbReference>
<dbReference type="PROSITE" id="PS00296">
    <property type="entry name" value="CHAPERONINS_CPN60"/>
    <property type="match status" value="1"/>
</dbReference>